<feature type="chain" id="PRO_0000331000" description="Glutamate--tRNA ligase">
    <location>
        <begin position="1"/>
        <end position="484"/>
    </location>
</feature>
<feature type="short sequence motif" description="'HIGH' region" evidence="1">
    <location>
        <begin position="11"/>
        <end position="21"/>
    </location>
</feature>
<feature type="short sequence motif" description="'KMSKS' region" evidence="1">
    <location>
        <begin position="255"/>
        <end position="259"/>
    </location>
</feature>
<feature type="binding site" evidence="1">
    <location>
        <position position="258"/>
    </location>
    <ligand>
        <name>ATP</name>
        <dbReference type="ChEBI" id="CHEBI:30616"/>
    </ligand>
</feature>
<proteinExistence type="inferred from homology"/>
<reference key="1">
    <citation type="journal article" date="2007" name="PLoS ONE">
        <title>A glimpse of streptococcal toxic shock syndrome from comparative genomics of S. suis 2 Chinese isolates.</title>
        <authorList>
            <person name="Chen C."/>
            <person name="Tang J."/>
            <person name="Dong W."/>
            <person name="Wang C."/>
            <person name="Feng Y."/>
            <person name="Wang J."/>
            <person name="Zheng F."/>
            <person name="Pan X."/>
            <person name="Liu D."/>
            <person name="Li M."/>
            <person name="Song Y."/>
            <person name="Zhu X."/>
            <person name="Sun H."/>
            <person name="Feng T."/>
            <person name="Guo Z."/>
            <person name="Ju A."/>
            <person name="Ge J."/>
            <person name="Dong Y."/>
            <person name="Sun W."/>
            <person name="Jiang Y."/>
            <person name="Wang J."/>
            <person name="Yan J."/>
            <person name="Yang H."/>
            <person name="Wang X."/>
            <person name="Gao G.F."/>
            <person name="Yang R."/>
            <person name="Wang J."/>
            <person name="Yu J."/>
        </authorList>
    </citation>
    <scope>NUCLEOTIDE SEQUENCE [LARGE SCALE GENOMIC DNA]</scope>
    <source>
        <strain>98HAH33</strain>
    </source>
</reference>
<name>SYE_STRS2</name>
<comment type="function">
    <text evidence="1">Catalyzes the attachment of glutamate to tRNA(Glu) in a two-step reaction: glutamate is first activated by ATP to form Glu-AMP and then transferred to the acceptor end of tRNA(Glu).</text>
</comment>
<comment type="catalytic activity">
    <reaction evidence="1">
        <text>tRNA(Glu) + L-glutamate + ATP = L-glutamyl-tRNA(Glu) + AMP + diphosphate</text>
        <dbReference type="Rhea" id="RHEA:23540"/>
        <dbReference type="Rhea" id="RHEA-COMP:9663"/>
        <dbReference type="Rhea" id="RHEA-COMP:9680"/>
        <dbReference type="ChEBI" id="CHEBI:29985"/>
        <dbReference type="ChEBI" id="CHEBI:30616"/>
        <dbReference type="ChEBI" id="CHEBI:33019"/>
        <dbReference type="ChEBI" id="CHEBI:78442"/>
        <dbReference type="ChEBI" id="CHEBI:78520"/>
        <dbReference type="ChEBI" id="CHEBI:456215"/>
        <dbReference type="EC" id="6.1.1.17"/>
    </reaction>
</comment>
<comment type="subunit">
    <text evidence="1">Monomer.</text>
</comment>
<comment type="subcellular location">
    <subcellularLocation>
        <location evidence="1">Cytoplasm</location>
    </subcellularLocation>
</comment>
<comment type="similarity">
    <text evidence="1">Belongs to the class-I aminoacyl-tRNA synthetase family. Glutamate--tRNA ligase type 1 subfamily.</text>
</comment>
<comment type="sequence caution" evidence="2">
    <conflict type="erroneous initiation">
        <sequence resource="EMBL-CDS" id="ABP93185"/>
    </conflict>
</comment>
<dbReference type="EC" id="6.1.1.17" evidence="1"/>
<dbReference type="EMBL" id="CP000408">
    <property type="protein sequence ID" value="ABP93185.1"/>
    <property type="status" value="ALT_INIT"/>
    <property type="molecule type" value="Genomic_DNA"/>
</dbReference>
<dbReference type="SMR" id="A4W496"/>
<dbReference type="KEGG" id="ssv:SSU98_2027"/>
<dbReference type="HOGENOM" id="CLU_015768_6_1_9"/>
<dbReference type="GO" id="GO:0005829">
    <property type="term" value="C:cytosol"/>
    <property type="evidence" value="ECO:0007669"/>
    <property type="project" value="TreeGrafter"/>
</dbReference>
<dbReference type="GO" id="GO:0005524">
    <property type="term" value="F:ATP binding"/>
    <property type="evidence" value="ECO:0007669"/>
    <property type="project" value="UniProtKB-UniRule"/>
</dbReference>
<dbReference type="GO" id="GO:0004818">
    <property type="term" value="F:glutamate-tRNA ligase activity"/>
    <property type="evidence" value="ECO:0007669"/>
    <property type="project" value="UniProtKB-UniRule"/>
</dbReference>
<dbReference type="GO" id="GO:0000049">
    <property type="term" value="F:tRNA binding"/>
    <property type="evidence" value="ECO:0007669"/>
    <property type="project" value="InterPro"/>
</dbReference>
<dbReference type="GO" id="GO:0008270">
    <property type="term" value="F:zinc ion binding"/>
    <property type="evidence" value="ECO:0007669"/>
    <property type="project" value="InterPro"/>
</dbReference>
<dbReference type="GO" id="GO:0006424">
    <property type="term" value="P:glutamyl-tRNA aminoacylation"/>
    <property type="evidence" value="ECO:0007669"/>
    <property type="project" value="UniProtKB-UniRule"/>
</dbReference>
<dbReference type="CDD" id="cd00808">
    <property type="entry name" value="GluRS_core"/>
    <property type="match status" value="1"/>
</dbReference>
<dbReference type="FunFam" id="1.10.10.350:FF:000002">
    <property type="entry name" value="Glutamate--tRNA ligase"/>
    <property type="match status" value="1"/>
</dbReference>
<dbReference type="FunFam" id="3.40.50.620:FF:000007">
    <property type="entry name" value="Glutamate--tRNA ligase"/>
    <property type="match status" value="1"/>
</dbReference>
<dbReference type="Gene3D" id="1.10.10.350">
    <property type="match status" value="1"/>
</dbReference>
<dbReference type="Gene3D" id="3.40.50.620">
    <property type="entry name" value="HUPs"/>
    <property type="match status" value="1"/>
</dbReference>
<dbReference type="HAMAP" id="MF_00022">
    <property type="entry name" value="Glu_tRNA_synth_type1"/>
    <property type="match status" value="1"/>
</dbReference>
<dbReference type="InterPro" id="IPR045462">
    <property type="entry name" value="aa-tRNA-synth_I_cd-bd"/>
</dbReference>
<dbReference type="InterPro" id="IPR020751">
    <property type="entry name" value="aa-tRNA-synth_I_codon-bd_sub2"/>
</dbReference>
<dbReference type="InterPro" id="IPR001412">
    <property type="entry name" value="aa-tRNA-synth_I_CS"/>
</dbReference>
<dbReference type="InterPro" id="IPR008925">
    <property type="entry name" value="aa_tRNA-synth_I_cd-bd_sf"/>
</dbReference>
<dbReference type="InterPro" id="IPR004527">
    <property type="entry name" value="Glu-tRNA-ligase_bac/mito"/>
</dbReference>
<dbReference type="InterPro" id="IPR000924">
    <property type="entry name" value="Glu/Gln-tRNA-synth"/>
</dbReference>
<dbReference type="InterPro" id="IPR020058">
    <property type="entry name" value="Glu/Gln-tRNA-synth_Ib_cat-dom"/>
</dbReference>
<dbReference type="InterPro" id="IPR049940">
    <property type="entry name" value="GluQ/Sye"/>
</dbReference>
<dbReference type="InterPro" id="IPR033910">
    <property type="entry name" value="GluRS_core"/>
</dbReference>
<dbReference type="InterPro" id="IPR014729">
    <property type="entry name" value="Rossmann-like_a/b/a_fold"/>
</dbReference>
<dbReference type="NCBIfam" id="TIGR00464">
    <property type="entry name" value="gltX_bact"/>
    <property type="match status" value="1"/>
</dbReference>
<dbReference type="PANTHER" id="PTHR43311">
    <property type="entry name" value="GLUTAMATE--TRNA LIGASE"/>
    <property type="match status" value="1"/>
</dbReference>
<dbReference type="PANTHER" id="PTHR43311:SF2">
    <property type="entry name" value="GLUTAMATE--TRNA LIGASE, MITOCHONDRIAL-RELATED"/>
    <property type="match status" value="1"/>
</dbReference>
<dbReference type="Pfam" id="PF19269">
    <property type="entry name" value="Anticodon_2"/>
    <property type="match status" value="1"/>
</dbReference>
<dbReference type="Pfam" id="PF00749">
    <property type="entry name" value="tRNA-synt_1c"/>
    <property type="match status" value="1"/>
</dbReference>
<dbReference type="PRINTS" id="PR00987">
    <property type="entry name" value="TRNASYNTHGLU"/>
</dbReference>
<dbReference type="SUPFAM" id="SSF48163">
    <property type="entry name" value="An anticodon-binding domain of class I aminoacyl-tRNA synthetases"/>
    <property type="match status" value="1"/>
</dbReference>
<dbReference type="SUPFAM" id="SSF52374">
    <property type="entry name" value="Nucleotidylyl transferase"/>
    <property type="match status" value="1"/>
</dbReference>
<dbReference type="PROSITE" id="PS00178">
    <property type="entry name" value="AA_TRNA_LIGASE_I"/>
    <property type="match status" value="1"/>
</dbReference>
<accession>A4W496</accession>
<organism>
    <name type="scientific">Streptococcus suis (strain 98HAH33)</name>
    <dbReference type="NCBI Taxonomy" id="391296"/>
    <lineage>
        <taxon>Bacteria</taxon>
        <taxon>Bacillati</taxon>
        <taxon>Bacillota</taxon>
        <taxon>Bacilli</taxon>
        <taxon>Lactobacillales</taxon>
        <taxon>Streptococcaceae</taxon>
        <taxon>Streptococcus</taxon>
    </lineage>
</organism>
<gene>
    <name evidence="1" type="primary">gltX</name>
    <name type="ordered locus">SSU98_2027</name>
</gene>
<protein>
    <recommendedName>
        <fullName evidence="1">Glutamate--tRNA ligase</fullName>
        <ecNumber evidence="1">6.1.1.17</ecNumber>
    </recommendedName>
    <alternativeName>
        <fullName evidence="1">Glutamyl-tRNA synthetase</fullName>
        <shortName evidence="1">GluRS</shortName>
    </alternativeName>
</protein>
<sequence length="484" mass="55533">MTKPIRVRYAPSPTGLLHIGNARTALFNYLFARHHGGTFLIRIEDTDRKRHVEDGERSQLENLRWLGIDWDESPETHENYRQSERLDIYQKYVDQLLAEGKAYKSYVTEEELAAERERQEAAGETPRYINEYLGMSEDEKTAYIAEREAAGIVPTVRLAVNEAGIYKWNDIVKGEIEFEGGNIGGDWVIQKRDGYPTYNFAVVIDDYLMKISHVIRGDDHIANTPKQLMVYEALGWEAPEFGHMTLIINSETGKKLSKRDTNTLQFIEDYRRKGYMPEAVFNFIGLLGWNPGGEEEIFSREQFIQLFDENRLSKSPAAFDQKKMDWMSNEYIKNADLETIFNLAKPFLEEAGRLTDKAEKLVELYKPQMSSADEIVGLTDLFFSDFPELTAEEKEVMAGETVPTVLNALKEKLEAMTDEDFQPDNIFPQIKAVQKETGIKGKNLFMPIRIAVSGEMHGPELPNTIYLLGREKSIQHIDNMLKSL</sequence>
<keyword id="KW-0030">Aminoacyl-tRNA synthetase</keyword>
<keyword id="KW-0067">ATP-binding</keyword>
<keyword id="KW-0963">Cytoplasm</keyword>
<keyword id="KW-0436">Ligase</keyword>
<keyword id="KW-0547">Nucleotide-binding</keyword>
<keyword id="KW-0648">Protein biosynthesis</keyword>
<evidence type="ECO:0000255" key="1">
    <source>
        <dbReference type="HAMAP-Rule" id="MF_00022"/>
    </source>
</evidence>
<evidence type="ECO:0000305" key="2"/>